<accession>B5R5X9</accession>
<gene>
    <name evidence="1" type="primary">aroL</name>
    <name type="ordered locus">SG0400</name>
</gene>
<protein>
    <recommendedName>
        <fullName evidence="1">Shikimate kinase 2</fullName>
        <shortName evidence="1">SK 2</shortName>
        <ecNumber evidence="1">2.7.1.71</ecNumber>
    </recommendedName>
</protein>
<sequence>MMQPLYLVGPRGCGKTTIGMALAQATGFRFADTDRWLQSHVQMSVADIVEKEGWGGFRARETAALEAVSAPSTVVATGGGIILTEYNRRYMHRVGVVIYLCAPVSTLVNRLEAEPEADLRPTLTGKPLSEEVREVLEQRDALYRETAHYIIDATKAPAQVVSEIIAALPPSTQRLQGDVYT</sequence>
<comment type="function">
    <text evidence="1">Catalyzes the specific phosphorylation of the 3-hydroxyl group of shikimic acid using ATP as a cosubstrate.</text>
</comment>
<comment type="catalytic activity">
    <reaction evidence="1">
        <text>shikimate + ATP = 3-phosphoshikimate + ADP + H(+)</text>
        <dbReference type="Rhea" id="RHEA:13121"/>
        <dbReference type="ChEBI" id="CHEBI:15378"/>
        <dbReference type="ChEBI" id="CHEBI:30616"/>
        <dbReference type="ChEBI" id="CHEBI:36208"/>
        <dbReference type="ChEBI" id="CHEBI:145989"/>
        <dbReference type="ChEBI" id="CHEBI:456216"/>
        <dbReference type="EC" id="2.7.1.71"/>
    </reaction>
</comment>
<comment type="cofactor">
    <cofactor evidence="1">
        <name>Mg(2+)</name>
        <dbReference type="ChEBI" id="CHEBI:18420"/>
    </cofactor>
    <text evidence="1">Binds 1 Mg(2+) ion per subunit.</text>
</comment>
<comment type="pathway">
    <text evidence="1">Metabolic intermediate biosynthesis; chorismate biosynthesis; chorismate from D-erythrose 4-phosphate and phosphoenolpyruvate: step 5/7.</text>
</comment>
<comment type="subunit">
    <text evidence="1">Monomer.</text>
</comment>
<comment type="subcellular location">
    <subcellularLocation>
        <location evidence="1">Cytoplasm</location>
    </subcellularLocation>
</comment>
<comment type="domain">
    <text evidence="1">The LID domain closes over the active site upon ATP binding.</text>
</comment>
<comment type="similarity">
    <text evidence="1">Belongs to the shikimate kinase family. AroL subfamily.</text>
</comment>
<proteinExistence type="inferred from homology"/>
<evidence type="ECO:0000255" key="1">
    <source>
        <dbReference type="HAMAP-Rule" id="MF_01269"/>
    </source>
</evidence>
<name>AROL_SALG2</name>
<feature type="chain" id="PRO_1000140140" description="Shikimate kinase 2">
    <location>
        <begin position="1"/>
        <end position="181"/>
    </location>
</feature>
<feature type="region of interest" description="LID domain">
    <location>
        <begin position="112"/>
        <end position="126"/>
    </location>
</feature>
<feature type="binding site" evidence="1">
    <location>
        <begin position="12"/>
        <end position="17"/>
    </location>
    <ligand>
        <name>ATP</name>
        <dbReference type="ChEBI" id="CHEBI:30616"/>
    </ligand>
</feature>
<feature type="binding site" evidence="1">
    <location>
        <position position="16"/>
    </location>
    <ligand>
        <name>Mg(2+)</name>
        <dbReference type="ChEBI" id="CHEBI:18420"/>
    </ligand>
</feature>
<feature type="binding site" evidence="1">
    <location>
        <position position="32"/>
    </location>
    <ligand>
        <name>Mg(2+)</name>
        <dbReference type="ChEBI" id="CHEBI:18420"/>
    </ligand>
</feature>
<feature type="binding site" evidence="1">
    <location>
        <position position="34"/>
    </location>
    <ligand>
        <name>substrate</name>
    </ligand>
</feature>
<feature type="binding site" evidence="1">
    <location>
        <position position="58"/>
    </location>
    <ligand>
        <name>substrate</name>
    </ligand>
</feature>
<feature type="binding site" evidence="1">
    <location>
        <position position="79"/>
    </location>
    <ligand>
        <name>substrate</name>
    </ligand>
</feature>
<feature type="binding site" evidence="1">
    <location>
        <position position="120"/>
    </location>
    <ligand>
        <name>ATP</name>
        <dbReference type="ChEBI" id="CHEBI:30616"/>
    </ligand>
</feature>
<feature type="binding site" evidence="1">
    <location>
        <position position="139"/>
    </location>
    <ligand>
        <name>substrate</name>
    </ligand>
</feature>
<reference key="1">
    <citation type="journal article" date="2008" name="Genome Res.">
        <title>Comparative genome analysis of Salmonella enteritidis PT4 and Salmonella gallinarum 287/91 provides insights into evolutionary and host adaptation pathways.</title>
        <authorList>
            <person name="Thomson N.R."/>
            <person name="Clayton D.J."/>
            <person name="Windhorst D."/>
            <person name="Vernikos G."/>
            <person name="Davidson S."/>
            <person name="Churcher C."/>
            <person name="Quail M.A."/>
            <person name="Stevens M."/>
            <person name="Jones M.A."/>
            <person name="Watson M."/>
            <person name="Barron A."/>
            <person name="Layton A."/>
            <person name="Pickard D."/>
            <person name="Kingsley R.A."/>
            <person name="Bignell A."/>
            <person name="Clark L."/>
            <person name="Harris B."/>
            <person name="Ormond D."/>
            <person name="Abdellah Z."/>
            <person name="Brooks K."/>
            <person name="Cherevach I."/>
            <person name="Chillingworth T."/>
            <person name="Woodward J."/>
            <person name="Norberczak H."/>
            <person name="Lord A."/>
            <person name="Arrowsmith C."/>
            <person name="Jagels K."/>
            <person name="Moule S."/>
            <person name="Mungall K."/>
            <person name="Saunders M."/>
            <person name="Whitehead S."/>
            <person name="Chabalgoity J.A."/>
            <person name="Maskell D."/>
            <person name="Humphreys T."/>
            <person name="Roberts M."/>
            <person name="Barrow P.A."/>
            <person name="Dougan G."/>
            <person name="Parkhill J."/>
        </authorList>
    </citation>
    <scope>NUCLEOTIDE SEQUENCE [LARGE SCALE GENOMIC DNA]</scope>
    <source>
        <strain>287/91 / NCTC 13346</strain>
    </source>
</reference>
<organism>
    <name type="scientific">Salmonella gallinarum (strain 287/91 / NCTC 13346)</name>
    <dbReference type="NCBI Taxonomy" id="550538"/>
    <lineage>
        <taxon>Bacteria</taxon>
        <taxon>Pseudomonadati</taxon>
        <taxon>Pseudomonadota</taxon>
        <taxon>Gammaproteobacteria</taxon>
        <taxon>Enterobacterales</taxon>
        <taxon>Enterobacteriaceae</taxon>
        <taxon>Salmonella</taxon>
    </lineage>
</organism>
<keyword id="KW-0028">Amino-acid biosynthesis</keyword>
<keyword id="KW-0057">Aromatic amino acid biosynthesis</keyword>
<keyword id="KW-0067">ATP-binding</keyword>
<keyword id="KW-0963">Cytoplasm</keyword>
<keyword id="KW-0418">Kinase</keyword>
<keyword id="KW-0460">Magnesium</keyword>
<keyword id="KW-0479">Metal-binding</keyword>
<keyword id="KW-0547">Nucleotide-binding</keyword>
<keyword id="KW-0808">Transferase</keyword>
<dbReference type="EC" id="2.7.1.71" evidence="1"/>
<dbReference type="EMBL" id="AM933173">
    <property type="protein sequence ID" value="CAR36299.1"/>
    <property type="molecule type" value="Genomic_DNA"/>
</dbReference>
<dbReference type="RefSeq" id="WP_000983569.1">
    <property type="nucleotide sequence ID" value="NC_011274.1"/>
</dbReference>
<dbReference type="SMR" id="B5R5X9"/>
<dbReference type="KEGG" id="seg:SG0400"/>
<dbReference type="HOGENOM" id="CLU_057607_4_3_6"/>
<dbReference type="UniPathway" id="UPA00053">
    <property type="reaction ID" value="UER00088"/>
</dbReference>
<dbReference type="Proteomes" id="UP000008321">
    <property type="component" value="Chromosome"/>
</dbReference>
<dbReference type="GO" id="GO:0005829">
    <property type="term" value="C:cytosol"/>
    <property type="evidence" value="ECO:0007669"/>
    <property type="project" value="TreeGrafter"/>
</dbReference>
<dbReference type="GO" id="GO:0005524">
    <property type="term" value="F:ATP binding"/>
    <property type="evidence" value="ECO:0007669"/>
    <property type="project" value="UniProtKB-UniRule"/>
</dbReference>
<dbReference type="GO" id="GO:0000287">
    <property type="term" value="F:magnesium ion binding"/>
    <property type="evidence" value="ECO:0007669"/>
    <property type="project" value="UniProtKB-UniRule"/>
</dbReference>
<dbReference type="GO" id="GO:0004765">
    <property type="term" value="F:shikimate kinase activity"/>
    <property type="evidence" value="ECO:0007669"/>
    <property type="project" value="UniProtKB-UniRule"/>
</dbReference>
<dbReference type="GO" id="GO:0008652">
    <property type="term" value="P:amino acid biosynthetic process"/>
    <property type="evidence" value="ECO:0007669"/>
    <property type="project" value="UniProtKB-KW"/>
</dbReference>
<dbReference type="GO" id="GO:0009073">
    <property type="term" value="P:aromatic amino acid family biosynthetic process"/>
    <property type="evidence" value="ECO:0007669"/>
    <property type="project" value="UniProtKB-KW"/>
</dbReference>
<dbReference type="GO" id="GO:0009423">
    <property type="term" value="P:chorismate biosynthetic process"/>
    <property type="evidence" value="ECO:0007669"/>
    <property type="project" value="UniProtKB-UniRule"/>
</dbReference>
<dbReference type="CDD" id="cd00464">
    <property type="entry name" value="SK"/>
    <property type="match status" value="1"/>
</dbReference>
<dbReference type="FunFam" id="3.40.50.300:FF:000408">
    <property type="entry name" value="Shikimate kinase 2"/>
    <property type="match status" value="1"/>
</dbReference>
<dbReference type="Gene3D" id="3.40.50.300">
    <property type="entry name" value="P-loop containing nucleotide triphosphate hydrolases"/>
    <property type="match status" value="1"/>
</dbReference>
<dbReference type="HAMAP" id="MF_00109">
    <property type="entry name" value="Shikimate_kinase"/>
    <property type="match status" value="1"/>
</dbReference>
<dbReference type="HAMAP" id="MF_01269">
    <property type="entry name" value="Shikimate_kinase_2"/>
    <property type="match status" value="1"/>
</dbReference>
<dbReference type="InterPro" id="IPR027417">
    <property type="entry name" value="P-loop_NTPase"/>
</dbReference>
<dbReference type="InterPro" id="IPR031322">
    <property type="entry name" value="Shikimate/glucono_kinase"/>
</dbReference>
<dbReference type="InterPro" id="IPR000623">
    <property type="entry name" value="Shikimate_kinase/TSH1"/>
</dbReference>
<dbReference type="InterPro" id="IPR027544">
    <property type="entry name" value="Shikimate_kinase_2"/>
</dbReference>
<dbReference type="InterPro" id="IPR023000">
    <property type="entry name" value="Shikimate_kinase_CS"/>
</dbReference>
<dbReference type="NCBIfam" id="NF002988">
    <property type="entry name" value="PRK03731.1"/>
    <property type="match status" value="1"/>
</dbReference>
<dbReference type="PANTHER" id="PTHR21087">
    <property type="entry name" value="SHIKIMATE KINASE"/>
    <property type="match status" value="1"/>
</dbReference>
<dbReference type="PANTHER" id="PTHR21087:SF21">
    <property type="entry name" value="SHIKIMATE KINASE 2"/>
    <property type="match status" value="1"/>
</dbReference>
<dbReference type="Pfam" id="PF01202">
    <property type="entry name" value="SKI"/>
    <property type="match status" value="1"/>
</dbReference>
<dbReference type="PRINTS" id="PR01100">
    <property type="entry name" value="SHIKIMTKNASE"/>
</dbReference>
<dbReference type="SUPFAM" id="SSF52540">
    <property type="entry name" value="P-loop containing nucleoside triphosphate hydrolases"/>
    <property type="match status" value="1"/>
</dbReference>
<dbReference type="PROSITE" id="PS01128">
    <property type="entry name" value="SHIKIMATE_KINASE"/>
    <property type="match status" value="1"/>
</dbReference>